<sequence>MSHHSSGLRSSISSTSYRRTFGPPPSLSPGAFSYSSSSRFSSSRLLGSGSPSSSARLGSFRAPRAGALRLPSERLDFSMAEALNQEFLATRSNEKQELQELNDRFANFIEKVRFLEQQNAALRGELSQARGQEPARADQLCQQELRELRRELELLGRERDRVQVERDGLAEDLGALKQRLEEETRKREDAEHNLVLFRKDVDDATLSRLELERKIESLMDEIEFLKKLHEEELRDLQVSVESQQVQQVEVEATVKPELTAALRDIRAQYENIAAKNLQEAEEWYKSKYADLSDAANRNHEALRQAKQEMNESRRQIQSLTCEVDGLRGTNEALLRQLRELEEQFALEAGGYQAGAARLEEELRQLKEEMARHLREYQELLNVKMALDIEIATYRKLLEGEESRISVPVHSFASLSLKTTVPEVEPPQDSHSRKMVLIRTIETRDGEKVVTESQKEQHSELDKSSIHSY</sequence>
<reference key="1">
    <citation type="journal article" date="1989" name="Neuron">
        <title>Structure of the gene encoding peripherin, an NGF-regulated neuronal-specific type III intermediate filament protein.</title>
        <authorList>
            <person name="Thompson M.A."/>
            <person name="Ziff E.B."/>
        </authorList>
    </citation>
    <scope>NUCLEOTIDE SEQUENCE [GENOMIC DNA]</scope>
    <scope>FUNCTION</scope>
</reference>
<reference key="2">
    <citation type="journal article" date="1995" name="Eur. J. Cell Biol.">
        <title>Translation initiation and assembly of peripherin in cultured cells.</title>
        <authorList>
            <person name="Ho C.L."/>
            <person name="Chin S.S."/>
            <person name="Carnevale K."/>
            <person name="Liem R.K."/>
        </authorList>
    </citation>
    <scope>NUCLEOTIDE SEQUENCE [MRNA]</scope>
</reference>
<reference key="3">
    <citation type="journal article" date="1988" name="J. Cell Biol.">
        <title>A nerve growth factor-regulated messenger RNA encodes a new intermediate filament protein.</title>
        <authorList>
            <person name="Leonard D.G."/>
            <person name="Gorham J.D."/>
            <person name="Cole P."/>
            <person name="Greene L.A."/>
            <person name="Ziff E.B."/>
        </authorList>
    </citation>
    <scope>NUCLEOTIDE SEQUENCE [MRNA] OF 8-468</scope>
    <scope>FUNCTION</scope>
</reference>
<reference key="4">
    <citation type="journal article" date="1988" name="J. Neurochem.">
        <title>Relationship between the nerve growth factor-regulated clone 73 gene product and the 58-kilodalton neuronal intermediate filament protein (peripherin).</title>
        <authorList>
            <person name="Aletta J.M."/>
            <person name="Angeletti R."/>
            <person name="Liem R.K."/>
            <person name="Purcell C."/>
            <person name="Shelanski M.L."/>
            <person name="Greene L.A."/>
        </authorList>
    </citation>
    <scope>NUCLEOTIDE SEQUENCE OF 267-280</scope>
</reference>
<reference key="5">
    <citation type="journal article" date="1988" name="Neuron">
        <title>A type III intermediate filament gene is expressed in mature neurons.</title>
        <authorList>
            <person name="Parysek L.M."/>
            <person name="Chisholm R.L."/>
            <person name="Ley C.A."/>
            <person name="Goldman R.D."/>
        </authorList>
    </citation>
    <scope>NUCLEOTIDE SEQUENCE OF 296-468</scope>
</reference>
<reference key="6">
    <citation type="submission" date="2006-11" db="UniProtKB">
        <authorList>
            <person name="Lubec G."/>
            <person name="Afjehi-Sadat L."/>
        </authorList>
    </citation>
    <scope>PROTEIN SEQUENCE OF 339-357 AND 404-417</scope>
    <scope>IDENTIFICATION BY MASS SPECTROMETRY</scope>
    <source>
        <strain>Sprague-Dawley</strain>
        <tissue>Spinal cord</tissue>
    </source>
</reference>
<reference key="7">
    <citation type="journal article" date="1989" name="J. Neurosci.">
        <title>Axotomy-induced changes in the expression of a type III neuronal intermediate filament gene.</title>
        <authorList>
            <person name="Oblinger M.M."/>
            <person name="Wong J."/>
            <person name="Parysek L.M."/>
        </authorList>
    </citation>
    <scope>FUNCTION</scope>
    <scope>SUBCELLULAR LOCATION</scope>
    <scope>TISSUE SPECIFICITY</scope>
    <scope>INDUCTION</scope>
</reference>
<reference key="8">
    <citation type="journal article" date="1990" name="Brain Res.">
        <title>Regulation of peripherin and neurofilament expression in regenerating rat motor neurons.</title>
        <authorList>
            <person name="Troy C.M."/>
            <person name="Muma N.A."/>
            <person name="Greene L.A."/>
            <person name="Price D.L."/>
            <person name="Shelanski M.L."/>
        </authorList>
    </citation>
    <scope>SUBCELLULAR LOCATION</scope>
    <scope>TISSUE SPECIFICITY</scope>
    <scope>INDUCTION</scope>
</reference>
<reference key="9">
    <citation type="journal article" date="1994" name="J. Neurosci. Res.">
        <title>Axonal transport of type III intermediate filament protein peripherin in intact and regenerating motor axons of the rat sciatic nerve.</title>
        <authorList>
            <person name="Chadan S."/>
            <person name="Le Gall J.Y."/>
            <person name="Di Giamberardino L."/>
            <person name="Filliatreau G."/>
        </authorList>
    </citation>
    <scope>FUNCTION</scope>
    <scope>SUBUNIT</scope>
    <scope>INDUCTION</scope>
</reference>
<reference key="10">
    <citation type="journal article" date="1997" name="J. Biol. Chem.">
        <title>Heterodimeric associations between neuronal intermediate filament proteins.</title>
        <authorList>
            <person name="Athlan E.S."/>
            <person name="Mushynski W.E."/>
        </authorList>
    </citation>
    <scope>SUBUNIT</scope>
    <scope>TISSUE SPECIFICITY</scope>
</reference>
<reference key="11">
    <citation type="journal article" date="1998" name="J. Neurochem.">
        <title>Peripherin is tyrosine-phosphorylated at its carboxyl-terminal tyrosine.</title>
        <authorList>
            <person name="Angelastro J.M."/>
            <person name="Ho C.L."/>
            <person name="Frappier T."/>
            <person name="Liem R.K."/>
            <person name="Greene L.A."/>
        </authorList>
    </citation>
    <scope>PHOSPHORYLATION AT TYR-468</scope>
</reference>
<reference key="12">
    <citation type="journal article" date="2007" name="J. Biol. Chem.">
        <title>Identification of peripherin as a Akt substrate in neurons.</title>
        <authorList>
            <person name="Konishi H."/>
            <person name="Namikawa K."/>
            <person name="Shikata K."/>
            <person name="Kobatake Y."/>
            <person name="Tachibana T."/>
            <person name="Kiyama H."/>
        </authorList>
    </citation>
    <scope>SUBCELLULAR LOCATION</scope>
    <scope>TISSUE SPECIFICITY</scope>
    <scope>INDUCTION</scope>
    <scope>PHOSPHORYLATION</scope>
</reference>
<reference key="13">
    <citation type="journal article" date="2007" name="Neurochem. Res.">
        <title>Tyrosine nitration is a novel post-translational modification occurring on the neural intermediate filament protein peripherin.</title>
        <authorList>
            <person name="Tedeschi G."/>
            <person name="Cappelletti G."/>
            <person name="Nonnis S."/>
            <person name="Taverna F."/>
            <person name="Negri A."/>
            <person name="Ronchi C."/>
            <person name="Ronchi S."/>
        </authorList>
    </citation>
    <scope>NITRATION AT TYR-17 AND TYR-376</scope>
    <scope>IDENTIFICATION BY MASS SPECTROMETRY</scope>
</reference>
<reference key="14">
    <citation type="journal article" date="2010" name="Brain Res.">
        <title>Peripherin and ATF3 genes are differentially regulated in regenerating and non-regenerating primary sensory neurons.</title>
        <authorList>
            <person name="Reid A.J."/>
            <person name="Welin D."/>
            <person name="Wiberg M."/>
            <person name="Terenghi G."/>
            <person name="Novikov L.N."/>
        </authorList>
    </citation>
    <scope>TISSUE SPECIFICITY</scope>
    <scope>INDUCTION</scope>
</reference>
<reference key="15">
    <citation type="journal article" date="2012" name="Nat. Commun.">
        <title>Quantitative maps of protein phosphorylation sites across 14 different rat organs and tissues.</title>
        <authorList>
            <person name="Lundby A."/>
            <person name="Secher A."/>
            <person name="Lage K."/>
            <person name="Nordsborg N.B."/>
            <person name="Dmytriyev A."/>
            <person name="Lundby C."/>
            <person name="Olsen J.V."/>
        </authorList>
    </citation>
    <scope>PHOSPHORYLATION [LARGE SCALE ANALYSIS] AT SER-28 AND SER-50</scope>
    <scope>IDENTIFICATION BY MASS SPECTROMETRY [LARGE SCALE ANALYSIS]</scope>
</reference>
<evidence type="ECO:0000250" key="1">
    <source>
        <dbReference type="UniProtKB" id="P15331"/>
    </source>
</evidence>
<evidence type="ECO:0000250" key="2">
    <source>
        <dbReference type="UniProtKB" id="P41219"/>
    </source>
</evidence>
<evidence type="ECO:0000255" key="3">
    <source>
        <dbReference type="PROSITE-ProRule" id="PRU01188"/>
    </source>
</evidence>
<evidence type="ECO:0000256" key="4">
    <source>
        <dbReference type="SAM" id="MobiDB-lite"/>
    </source>
</evidence>
<evidence type="ECO:0000269" key="5">
    <source>
    </source>
</evidence>
<evidence type="ECO:0000269" key="6">
    <source>
    </source>
</evidence>
<evidence type="ECO:0000269" key="7">
    <source>
    </source>
</evidence>
<evidence type="ECO:0000269" key="8">
    <source>
    </source>
</evidence>
<evidence type="ECO:0000269" key="9">
    <source>
    </source>
</evidence>
<evidence type="ECO:0000269" key="10">
    <source>
    </source>
</evidence>
<evidence type="ECO:0000269" key="11">
    <source>
    </source>
</evidence>
<evidence type="ECO:0000269" key="12">
    <source>
    </source>
</evidence>
<evidence type="ECO:0000269" key="13">
    <source>
    </source>
</evidence>
<evidence type="ECO:0000269" key="14">
    <source>
    </source>
</evidence>
<evidence type="ECO:0000305" key="15"/>
<evidence type="ECO:0007744" key="16">
    <source>
    </source>
</evidence>
<keyword id="KW-0966">Cell projection</keyword>
<keyword id="KW-0175">Coiled coil</keyword>
<keyword id="KW-0963">Cytoplasm</keyword>
<keyword id="KW-0206">Cytoskeleton</keyword>
<keyword id="KW-0903">Direct protein sequencing</keyword>
<keyword id="KW-0403">Intermediate filament</keyword>
<keyword id="KW-0944">Nitration</keyword>
<keyword id="KW-0597">Phosphoprotein</keyword>
<keyword id="KW-1185">Reference proteome</keyword>
<organism>
    <name type="scientific">Rattus norvegicus</name>
    <name type="common">Rat</name>
    <dbReference type="NCBI Taxonomy" id="10116"/>
    <lineage>
        <taxon>Eukaryota</taxon>
        <taxon>Metazoa</taxon>
        <taxon>Chordata</taxon>
        <taxon>Craniata</taxon>
        <taxon>Vertebrata</taxon>
        <taxon>Euteleostomi</taxon>
        <taxon>Mammalia</taxon>
        <taxon>Eutheria</taxon>
        <taxon>Euarchontoglires</taxon>
        <taxon>Glires</taxon>
        <taxon>Rodentia</taxon>
        <taxon>Myomorpha</taxon>
        <taxon>Muroidea</taxon>
        <taxon>Muridae</taxon>
        <taxon>Murinae</taxon>
        <taxon>Rattus</taxon>
    </lineage>
</organism>
<gene>
    <name type="primary">Prph</name>
    <name type="synonym">Prph1</name>
</gene>
<name>PERI_RAT</name>
<dbReference type="EMBL" id="M26232">
    <property type="protein sequence ID" value="AAA41829.1"/>
    <property type="molecule type" value="Genomic_DNA"/>
</dbReference>
<dbReference type="EMBL" id="AF031878">
    <property type="protein sequence ID" value="AAB87067.1"/>
    <property type="molecule type" value="mRNA"/>
</dbReference>
<dbReference type="PIR" id="JN0016">
    <property type="entry name" value="JN0016"/>
</dbReference>
<dbReference type="SMR" id="P21807"/>
<dbReference type="FunCoup" id="P21807">
    <property type="interactions" value="58"/>
</dbReference>
<dbReference type="IntAct" id="P21807">
    <property type="interactions" value="3"/>
</dbReference>
<dbReference type="MINT" id="P21807"/>
<dbReference type="STRING" id="10116.ENSRNOP00000072008"/>
<dbReference type="iPTMnet" id="P21807"/>
<dbReference type="PhosphoSitePlus" id="P21807"/>
<dbReference type="jPOST" id="P21807"/>
<dbReference type="PaxDb" id="10116-ENSRNOP00000021010"/>
<dbReference type="PeptideAtlas" id="P21807"/>
<dbReference type="UCSC" id="RGD:3414">
    <property type="organism name" value="rat"/>
</dbReference>
<dbReference type="AGR" id="RGD:3414"/>
<dbReference type="RGD" id="3414">
    <property type="gene designation" value="Prph"/>
</dbReference>
<dbReference type="eggNOG" id="ENOG502QPSH">
    <property type="taxonomic scope" value="Eukaryota"/>
</dbReference>
<dbReference type="InParanoid" id="P21807"/>
<dbReference type="PhylomeDB" id="P21807"/>
<dbReference type="PRO" id="PR:P21807"/>
<dbReference type="Proteomes" id="UP000002494">
    <property type="component" value="Unplaced"/>
</dbReference>
<dbReference type="GO" id="GO:0030424">
    <property type="term" value="C:axon"/>
    <property type="evidence" value="ECO:0000266"/>
    <property type="project" value="RGD"/>
</dbReference>
<dbReference type="GO" id="GO:0044299">
    <property type="term" value="C:C-fiber"/>
    <property type="evidence" value="ECO:0000266"/>
    <property type="project" value="RGD"/>
</dbReference>
<dbReference type="GO" id="GO:0005882">
    <property type="term" value="C:intermediate filament"/>
    <property type="evidence" value="ECO:0000266"/>
    <property type="project" value="RGD"/>
</dbReference>
<dbReference type="GO" id="GO:0005883">
    <property type="term" value="C:neurofilament"/>
    <property type="evidence" value="ECO:0000266"/>
    <property type="project" value="RGD"/>
</dbReference>
<dbReference type="GO" id="GO:0043025">
    <property type="term" value="C:neuronal cell body"/>
    <property type="evidence" value="ECO:0000314"/>
    <property type="project" value="MGI"/>
</dbReference>
<dbReference type="GO" id="GO:0043204">
    <property type="term" value="C:perikaryon"/>
    <property type="evidence" value="ECO:0007669"/>
    <property type="project" value="UniProtKB-SubCell"/>
</dbReference>
<dbReference type="GO" id="GO:0001750">
    <property type="term" value="C:photoreceptor outer segment"/>
    <property type="evidence" value="ECO:0000266"/>
    <property type="project" value="RGD"/>
</dbReference>
<dbReference type="GO" id="GO:0042622">
    <property type="term" value="C:photoreceptor outer segment membrane"/>
    <property type="evidence" value="ECO:0000266"/>
    <property type="project" value="RGD"/>
</dbReference>
<dbReference type="GO" id="GO:0005886">
    <property type="term" value="C:plasma membrane"/>
    <property type="evidence" value="ECO:0000318"/>
    <property type="project" value="GO_Central"/>
</dbReference>
<dbReference type="GO" id="GO:0043195">
    <property type="term" value="C:terminal bouton"/>
    <property type="evidence" value="ECO:0000314"/>
    <property type="project" value="RGD"/>
</dbReference>
<dbReference type="GO" id="GO:0045098">
    <property type="term" value="C:type III intermediate filament"/>
    <property type="evidence" value="ECO:0000314"/>
    <property type="project" value="RGD"/>
</dbReference>
<dbReference type="GO" id="GO:0044877">
    <property type="term" value="F:protein-containing complex binding"/>
    <property type="evidence" value="ECO:0000314"/>
    <property type="project" value="RGD"/>
</dbReference>
<dbReference type="GO" id="GO:0005200">
    <property type="term" value="F:structural constituent of cytoskeleton"/>
    <property type="evidence" value="ECO:0000318"/>
    <property type="project" value="GO_Central"/>
</dbReference>
<dbReference type="GO" id="GO:0045104">
    <property type="term" value="P:intermediate filament cytoskeleton organization"/>
    <property type="evidence" value="ECO:0000315"/>
    <property type="project" value="RGD"/>
</dbReference>
<dbReference type="GO" id="GO:0045109">
    <property type="term" value="P:intermediate filament organization"/>
    <property type="evidence" value="ECO:0000318"/>
    <property type="project" value="GO_Central"/>
</dbReference>
<dbReference type="FunFam" id="1.20.5.1160:FF:000001">
    <property type="entry name" value="Keratin type II"/>
    <property type="match status" value="1"/>
</dbReference>
<dbReference type="FunFam" id="1.20.5.170:FF:000002">
    <property type="entry name" value="Type I keratin KA11"/>
    <property type="match status" value="1"/>
</dbReference>
<dbReference type="FunFam" id="1.20.5.500:FF:000001">
    <property type="entry name" value="Type II keratin 23"/>
    <property type="match status" value="1"/>
</dbReference>
<dbReference type="Gene3D" id="1.20.5.170">
    <property type="match status" value="1"/>
</dbReference>
<dbReference type="Gene3D" id="1.20.5.500">
    <property type="entry name" value="Single helix bin"/>
    <property type="match status" value="1"/>
</dbReference>
<dbReference type="Gene3D" id="1.20.5.1160">
    <property type="entry name" value="Vasodilator-stimulated phosphoprotein"/>
    <property type="match status" value="1"/>
</dbReference>
<dbReference type="InterPro" id="IPR018039">
    <property type="entry name" value="IF_conserved"/>
</dbReference>
<dbReference type="InterPro" id="IPR039008">
    <property type="entry name" value="IF_rod_dom"/>
</dbReference>
<dbReference type="InterPro" id="IPR006821">
    <property type="entry name" value="Intermed_filament_DNA-bd"/>
</dbReference>
<dbReference type="InterPro" id="IPR050405">
    <property type="entry name" value="Intermediate_filament"/>
</dbReference>
<dbReference type="InterPro" id="IPR002957">
    <property type="entry name" value="Keratin_I"/>
</dbReference>
<dbReference type="PANTHER" id="PTHR45652">
    <property type="entry name" value="GLIAL FIBRILLARY ACIDIC PROTEIN"/>
    <property type="match status" value="1"/>
</dbReference>
<dbReference type="PANTHER" id="PTHR45652:SF14">
    <property type="entry name" value="PERIPHERIN"/>
    <property type="match status" value="1"/>
</dbReference>
<dbReference type="Pfam" id="PF00038">
    <property type="entry name" value="Filament"/>
    <property type="match status" value="1"/>
</dbReference>
<dbReference type="Pfam" id="PF04732">
    <property type="entry name" value="Filament_head"/>
    <property type="match status" value="1"/>
</dbReference>
<dbReference type="PRINTS" id="PR01248">
    <property type="entry name" value="TYPE1KERATIN"/>
</dbReference>
<dbReference type="SMART" id="SM01391">
    <property type="entry name" value="Filament"/>
    <property type="match status" value="1"/>
</dbReference>
<dbReference type="SUPFAM" id="SSF64593">
    <property type="entry name" value="Intermediate filament protein, coiled coil region"/>
    <property type="match status" value="2"/>
</dbReference>
<dbReference type="PROSITE" id="PS00226">
    <property type="entry name" value="IF_ROD_1"/>
    <property type="match status" value="1"/>
</dbReference>
<dbReference type="PROSITE" id="PS51842">
    <property type="entry name" value="IF_ROD_2"/>
    <property type="match status" value="1"/>
</dbReference>
<feature type="chain" id="PRO_0000063781" description="Peripherin">
    <location>
        <begin position="1"/>
        <end position="468"/>
    </location>
</feature>
<feature type="domain" description="IF rod" evidence="3">
    <location>
        <begin position="94"/>
        <end position="404"/>
    </location>
</feature>
<feature type="region of interest" description="Head">
    <location>
        <begin position="1"/>
        <end position="96"/>
    </location>
</feature>
<feature type="region of interest" description="Disordered" evidence="4">
    <location>
        <begin position="1"/>
        <end position="22"/>
    </location>
</feature>
<feature type="region of interest" description="Coil 1A">
    <location>
        <begin position="97"/>
        <end position="129"/>
    </location>
</feature>
<feature type="region of interest" description="Linker 1">
    <location>
        <begin position="130"/>
        <end position="140"/>
    </location>
</feature>
<feature type="region of interest" description="Coil 1B">
    <location>
        <begin position="141"/>
        <end position="236"/>
    </location>
</feature>
<feature type="region of interest" description="Linker 2">
    <location>
        <begin position="237"/>
        <end position="259"/>
    </location>
</feature>
<feature type="region of interest" description="Coil 2">
    <location>
        <begin position="260"/>
        <end position="402"/>
    </location>
</feature>
<feature type="region of interest" description="Tail">
    <location>
        <begin position="403"/>
        <end position="468"/>
    </location>
</feature>
<feature type="region of interest" description="Disordered" evidence="4">
    <location>
        <begin position="445"/>
        <end position="468"/>
    </location>
</feature>
<feature type="compositionally biased region" description="Low complexity" evidence="4">
    <location>
        <begin position="1"/>
        <end position="16"/>
    </location>
</feature>
<feature type="modified residue" description="3'-nitrotyrosine" evidence="5">
    <location>
        <position position="17"/>
    </location>
</feature>
<feature type="modified residue" description="Phosphoserine" evidence="16">
    <location>
        <position position="28"/>
    </location>
</feature>
<feature type="modified residue" description="Phosphoserine" evidence="16">
    <location>
        <position position="50"/>
    </location>
</feature>
<feature type="modified residue" description="Phosphoserine" evidence="1">
    <location>
        <position position="59"/>
    </location>
</feature>
<feature type="modified residue" description="3'-nitrotyrosine" evidence="5">
    <location>
        <position position="376"/>
    </location>
</feature>
<feature type="modified residue" description="Phosphotyrosine" evidence="14">
    <location>
        <position position="468"/>
    </location>
</feature>
<feature type="sequence conflict" description="In Ref. 3." evidence="15" ref="3">
    <original>ERD</original>
    <variation>SAY</variation>
    <location>
        <begin position="158"/>
        <end position="160"/>
    </location>
</feature>
<feature type="sequence conflict" description="In Ref. 3." evidence="15" ref="3">
    <original>L</original>
    <variation>K</variation>
    <location>
        <position position="291"/>
    </location>
</feature>
<feature type="sequence conflict" description="In Ref. 3." evidence="15" ref="3">
    <original>L</original>
    <variation>K</variation>
    <location>
        <position position="436"/>
    </location>
</feature>
<accession>P21807</accession>
<proteinExistence type="evidence at protein level"/>
<comment type="function">
    <text evidence="1 9 10 11 12">Class-III neuronal intermediate filament protein (PubMed:2624740, PubMed:3339087). My form an independent structural network without the involvement of other neurofilaments or may cooperate with the neuronal intermediate filament proteins NEFL, NEFH, NEFM and INA to form a filamentous network (By similarity). Assembly of the neuronal intermediate filaments may be regulated by RAB7A (By similarity). Plays a role in the development of unmyelinated sensory neurons (By similarity). May be involved in axon elongation and axon regeneration after injury (PubMed:2585054, PubMed:7530776). Inhibits neurite extension in type II spiral ganglion neurons in the cochlea (By similarity).</text>
</comment>
<comment type="subunit">
    <text evidence="1 2 12 13">Forms homodimers (in vitro) (PubMed:7530776, PubMed:9388258). Homopolymerizes into a filamentous network (in vitro) (By similarity). Forms heterodimers with NEFL, NEFM or NEFH (in vitro) (PubMed:9388258). Interacts with DST (via C-terminus) (By similarity). Interacts with RAB7A; the interaction is direct (By similarity). Interacts with PRKCE (via phorbol-ester/DAG-type 2 domain) (By similarity).</text>
</comment>
<comment type="interaction">
    <interactant intactId="EBI-446227">
        <id>P21807</id>
    </interactant>
    <interactant intactId="EBI-446159">
        <id>Q91ZU6</id>
        <label>Dst</label>
    </interactant>
    <organismsDiffer>true</organismsDiffer>
    <experiments>3</experiments>
</comment>
<comment type="subcellular location">
    <subcellularLocation>
        <location evidence="6">Cytoplasm</location>
        <location evidence="6">Cytoskeleton</location>
    </subcellularLocation>
    <subcellularLocation>
        <location evidence="6">Cell projection</location>
        <location evidence="6">Axon</location>
    </subcellularLocation>
    <subcellularLocation>
        <location evidence="6 8 9">Perikaryon</location>
    </subcellularLocation>
</comment>
<comment type="tissue specificity">
    <text evidence="6 7 8 9 13">Expressed in hypoglossal motor neurons (at protein level) (PubMed:17569669, PubMed:2126481). Expressed in the small and large sensory neurons of the dorsal root ganglion (at protein level) (PubMed:2126481, PubMed:2585054, PubMed:9388258). Expressed in cutaneous and muscular sensory neurons (PubMed:19913522).</text>
</comment>
<comment type="induction">
    <text evidence="6 7 8 9 12">Up-regulated in regenerating neurons after nerve injury.</text>
</comment>
<comment type="PTM">
    <text evidence="6">Phosphorylated; phosphorylation increases after nerve injury in regenerating neurons.</text>
</comment>
<comment type="similarity">
    <text evidence="3">Belongs to the intermediate filament family.</text>
</comment>
<protein>
    <recommendedName>
        <fullName>Peripherin</fullName>
    </recommendedName>
</protein>